<organism>
    <name type="scientific">Synechococcus sp. (strain JA-3-3Ab)</name>
    <name type="common">Cyanobacteria bacterium Yellowstone A-Prime</name>
    <dbReference type="NCBI Taxonomy" id="321327"/>
    <lineage>
        <taxon>Bacteria</taxon>
        <taxon>Bacillati</taxon>
        <taxon>Cyanobacteriota</taxon>
        <taxon>Cyanophyceae</taxon>
        <taxon>Synechococcales</taxon>
        <taxon>Synechococcaceae</taxon>
        <taxon>Synechococcus</taxon>
    </lineage>
</organism>
<feature type="chain" id="PRO_0000268535" description="Bifunctional protein FolD">
    <location>
        <begin position="1"/>
        <end position="289"/>
    </location>
</feature>
<feature type="binding site" evidence="1">
    <location>
        <begin position="166"/>
        <end position="168"/>
    </location>
    <ligand>
        <name>NADP(+)</name>
        <dbReference type="ChEBI" id="CHEBI:58349"/>
    </ligand>
</feature>
<feature type="binding site" evidence="1">
    <location>
        <position position="191"/>
    </location>
    <ligand>
        <name>NADP(+)</name>
        <dbReference type="ChEBI" id="CHEBI:58349"/>
    </ligand>
</feature>
<feature type="binding site" evidence="1">
    <location>
        <position position="232"/>
    </location>
    <ligand>
        <name>NADP(+)</name>
        <dbReference type="ChEBI" id="CHEBI:58349"/>
    </ligand>
</feature>
<sequence length="289" mass="30469">MSAKILDGKALAGRLQAEMAAQVQAWLPRVGRPPGLAVLRVGEDPASAAYVRGKERACERVGIASFGRHFSAQDSPAHLLDAIAQLNQDERVDGILVQLPLPPGWDPIPPLLAIDPAKDVDGLHPLNLGRLVRGEPGLRSCTPLGVMRLLQAEGIPIAGRKAVVVGRSLLVGKPLSLMLLAADATVTVAHSRTPNLAEVTRSADIVVMAVGRPRLLTADMVKPGAVVVDVGINRIQDPDGSEQLVGDVDYEAVKERAAAITPVPGGVGPMTVTMLLANTLESYKLRSHL</sequence>
<accession>Q2JT84</accession>
<keyword id="KW-0028">Amino-acid biosynthesis</keyword>
<keyword id="KW-0368">Histidine biosynthesis</keyword>
<keyword id="KW-0378">Hydrolase</keyword>
<keyword id="KW-0486">Methionine biosynthesis</keyword>
<keyword id="KW-0511">Multifunctional enzyme</keyword>
<keyword id="KW-0521">NADP</keyword>
<keyword id="KW-0554">One-carbon metabolism</keyword>
<keyword id="KW-0560">Oxidoreductase</keyword>
<keyword id="KW-0658">Purine biosynthesis</keyword>
<comment type="function">
    <text evidence="1">Catalyzes the oxidation of 5,10-methylenetetrahydrofolate to 5,10-methenyltetrahydrofolate and then the hydrolysis of 5,10-methenyltetrahydrofolate to 10-formyltetrahydrofolate.</text>
</comment>
<comment type="catalytic activity">
    <reaction evidence="1">
        <text>(6R)-5,10-methylene-5,6,7,8-tetrahydrofolate + NADP(+) = (6R)-5,10-methenyltetrahydrofolate + NADPH</text>
        <dbReference type="Rhea" id="RHEA:22812"/>
        <dbReference type="ChEBI" id="CHEBI:15636"/>
        <dbReference type="ChEBI" id="CHEBI:57455"/>
        <dbReference type="ChEBI" id="CHEBI:57783"/>
        <dbReference type="ChEBI" id="CHEBI:58349"/>
        <dbReference type="EC" id="1.5.1.5"/>
    </reaction>
</comment>
<comment type="catalytic activity">
    <reaction evidence="1">
        <text>(6R)-5,10-methenyltetrahydrofolate + H2O = (6R)-10-formyltetrahydrofolate + H(+)</text>
        <dbReference type="Rhea" id="RHEA:23700"/>
        <dbReference type="ChEBI" id="CHEBI:15377"/>
        <dbReference type="ChEBI" id="CHEBI:15378"/>
        <dbReference type="ChEBI" id="CHEBI:57455"/>
        <dbReference type="ChEBI" id="CHEBI:195366"/>
        <dbReference type="EC" id="3.5.4.9"/>
    </reaction>
</comment>
<comment type="pathway">
    <text evidence="1">One-carbon metabolism; tetrahydrofolate interconversion.</text>
</comment>
<comment type="subunit">
    <text evidence="1">Homodimer.</text>
</comment>
<comment type="similarity">
    <text evidence="1">Belongs to the tetrahydrofolate dehydrogenase/cyclohydrolase family.</text>
</comment>
<evidence type="ECO:0000255" key="1">
    <source>
        <dbReference type="HAMAP-Rule" id="MF_01576"/>
    </source>
</evidence>
<proteinExistence type="inferred from homology"/>
<protein>
    <recommendedName>
        <fullName evidence="1">Bifunctional protein FolD</fullName>
    </recommendedName>
    <domain>
        <recommendedName>
            <fullName evidence="1">Methylenetetrahydrofolate dehydrogenase</fullName>
            <ecNumber evidence="1">1.5.1.5</ecNumber>
        </recommendedName>
    </domain>
    <domain>
        <recommendedName>
            <fullName evidence="1">Methenyltetrahydrofolate cyclohydrolase</fullName>
            <ecNumber evidence="1">3.5.4.9</ecNumber>
        </recommendedName>
    </domain>
</protein>
<dbReference type="EC" id="1.5.1.5" evidence="1"/>
<dbReference type="EC" id="3.5.4.9" evidence="1"/>
<dbReference type="EMBL" id="CP000239">
    <property type="protein sequence ID" value="ABD00118.1"/>
    <property type="molecule type" value="Genomic_DNA"/>
</dbReference>
<dbReference type="RefSeq" id="WP_011430792.1">
    <property type="nucleotide sequence ID" value="NC_007775.1"/>
</dbReference>
<dbReference type="SMR" id="Q2JT84"/>
<dbReference type="STRING" id="321327.CYA_1974"/>
<dbReference type="KEGG" id="cya:CYA_1974"/>
<dbReference type="eggNOG" id="COG0190">
    <property type="taxonomic scope" value="Bacteria"/>
</dbReference>
<dbReference type="HOGENOM" id="CLU_034045_2_1_3"/>
<dbReference type="OrthoDB" id="9803580at2"/>
<dbReference type="UniPathway" id="UPA00193"/>
<dbReference type="Proteomes" id="UP000008818">
    <property type="component" value="Chromosome"/>
</dbReference>
<dbReference type="GO" id="GO:0005829">
    <property type="term" value="C:cytosol"/>
    <property type="evidence" value="ECO:0007669"/>
    <property type="project" value="TreeGrafter"/>
</dbReference>
<dbReference type="GO" id="GO:0004477">
    <property type="term" value="F:methenyltetrahydrofolate cyclohydrolase activity"/>
    <property type="evidence" value="ECO:0007669"/>
    <property type="project" value="UniProtKB-UniRule"/>
</dbReference>
<dbReference type="GO" id="GO:0004488">
    <property type="term" value="F:methylenetetrahydrofolate dehydrogenase (NADP+) activity"/>
    <property type="evidence" value="ECO:0007669"/>
    <property type="project" value="UniProtKB-UniRule"/>
</dbReference>
<dbReference type="GO" id="GO:0000105">
    <property type="term" value="P:L-histidine biosynthetic process"/>
    <property type="evidence" value="ECO:0007669"/>
    <property type="project" value="UniProtKB-KW"/>
</dbReference>
<dbReference type="GO" id="GO:0009086">
    <property type="term" value="P:methionine biosynthetic process"/>
    <property type="evidence" value="ECO:0007669"/>
    <property type="project" value="UniProtKB-KW"/>
</dbReference>
<dbReference type="GO" id="GO:0006164">
    <property type="term" value="P:purine nucleotide biosynthetic process"/>
    <property type="evidence" value="ECO:0007669"/>
    <property type="project" value="UniProtKB-KW"/>
</dbReference>
<dbReference type="GO" id="GO:0035999">
    <property type="term" value="P:tetrahydrofolate interconversion"/>
    <property type="evidence" value="ECO:0007669"/>
    <property type="project" value="UniProtKB-UniRule"/>
</dbReference>
<dbReference type="CDD" id="cd01080">
    <property type="entry name" value="NAD_bind_m-THF_DH_Cyclohyd"/>
    <property type="match status" value="1"/>
</dbReference>
<dbReference type="FunFam" id="3.40.50.720:FF:000006">
    <property type="entry name" value="Bifunctional protein FolD"/>
    <property type="match status" value="1"/>
</dbReference>
<dbReference type="FunFam" id="3.40.50.10860:FF:000005">
    <property type="entry name" value="C-1-tetrahydrofolate synthase, cytoplasmic, putative"/>
    <property type="match status" value="1"/>
</dbReference>
<dbReference type="Gene3D" id="3.40.50.10860">
    <property type="entry name" value="Leucine Dehydrogenase, chain A, domain 1"/>
    <property type="match status" value="1"/>
</dbReference>
<dbReference type="Gene3D" id="3.40.50.720">
    <property type="entry name" value="NAD(P)-binding Rossmann-like Domain"/>
    <property type="match status" value="1"/>
</dbReference>
<dbReference type="HAMAP" id="MF_01576">
    <property type="entry name" value="THF_DHG_CYH"/>
    <property type="match status" value="1"/>
</dbReference>
<dbReference type="InterPro" id="IPR046346">
    <property type="entry name" value="Aminoacid_DH-like_N_sf"/>
</dbReference>
<dbReference type="InterPro" id="IPR036291">
    <property type="entry name" value="NAD(P)-bd_dom_sf"/>
</dbReference>
<dbReference type="InterPro" id="IPR000672">
    <property type="entry name" value="THF_DH/CycHdrlase"/>
</dbReference>
<dbReference type="InterPro" id="IPR020630">
    <property type="entry name" value="THF_DH/CycHdrlase_cat_dom"/>
</dbReference>
<dbReference type="InterPro" id="IPR020867">
    <property type="entry name" value="THF_DH/CycHdrlase_CS"/>
</dbReference>
<dbReference type="InterPro" id="IPR020631">
    <property type="entry name" value="THF_DH/CycHdrlase_NAD-bd_dom"/>
</dbReference>
<dbReference type="NCBIfam" id="NF010783">
    <property type="entry name" value="PRK14186.1"/>
    <property type="match status" value="1"/>
</dbReference>
<dbReference type="PANTHER" id="PTHR48099:SF5">
    <property type="entry name" value="C-1-TETRAHYDROFOLATE SYNTHASE, CYTOPLASMIC"/>
    <property type="match status" value="1"/>
</dbReference>
<dbReference type="PANTHER" id="PTHR48099">
    <property type="entry name" value="C-1-TETRAHYDROFOLATE SYNTHASE, CYTOPLASMIC-RELATED"/>
    <property type="match status" value="1"/>
</dbReference>
<dbReference type="Pfam" id="PF00763">
    <property type="entry name" value="THF_DHG_CYH"/>
    <property type="match status" value="1"/>
</dbReference>
<dbReference type="Pfam" id="PF02882">
    <property type="entry name" value="THF_DHG_CYH_C"/>
    <property type="match status" value="1"/>
</dbReference>
<dbReference type="PRINTS" id="PR00085">
    <property type="entry name" value="THFDHDRGNASE"/>
</dbReference>
<dbReference type="SUPFAM" id="SSF53223">
    <property type="entry name" value="Aminoacid dehydrogenase-like, N-terminal domain"/>
    <property type="match status" value="1"/>
</dbReference>
<dbReference type="SUPFAM" id="SSF51735">
    <property type="entry name" value="NAD(P)-binding Rossmann-fold domains"/>
    <property type="match status" value="1"/>
</dbReference>
<dbReference type="PROSITE" id="PS00767">
    <property type="entry name" value="THF_DHG_CYH_2"/>
    <property type="match status" value="1"/>
</dbReference>
<name>FOLD_SYNJA</name>
<reference key="1">
    <citation type="journal article" date="2007" name="ISME J.">
        <title>Population level functional diversity in a microbial community revealed by comparative genomic and metagenomic analyses.</title>
        <authorList>
            <person name="Bhaya D."/>
            <person name="Grossman A.R."/>
            <person name="Steunou A.-S."/>
            <person name="Khuri N."/>
            <person name="Cohan F.M."/>
            <person name="Hamamura N."/>
            <person name="Melendrez M.C."/>
            <person name="Bateson M.M."/>
            <person name="Ward D.M."/>
            <person name="Heidelberg J.F."/>
        </authorList>
    </citation>
    <scope>NUCLEOTIDE SEQUENCE [LARGE SCALE GENOMIC DNA]</scope>
    <source>
        <strain>JA-3-3Ab</strain>
    </source>
</reference>
<gene>
    <name evidence="1" type="primary">folD</name>
    <name type="ordered locus">CYA_1974</name>
</gene>